<proteinExistence type="inferred from homology"/>
<sequence length="181" mass="20201">MELSQTALFIGSIINLNALVLILRAWLQFARVDYYNPVSTFAVKMTDPVLKPLRKIAPTVKNIDTSALLLIFIIGMLKGIIYFGLSVNVLLVLGVLTVLKSIGLAIFYVLFIGAVLSWFNRGNNSISYAFYQLSEPLLKPIRRLLPTLGMIDFSPMVVMFILLFLNNFMLDLLGGLWIIAG</sequence>
<protein>
    <recommendedName>
        <fullName>Uncharacterized protein HI_1036</fullName>
    </recommendedName>
</protein>
<dbReference type="EMBL" id="L42023">
    <property type="protein sequence ID" value="AAC22696.1"/>
    <property type="status" value="ALT_INIT"/>
    <property type="molecule type" value="Genomic_DNA"/>
</dbReference>
<dbReference type="PIR" id="G64018">
    <property type="entry name" value="G64018"/>
</dbReference>
<dbReference type="RefSeq" id="NP_439196.2">
    <property type="nucleotide sequence ID" value="NC_000907.1"/>
</dbReference>
<dbReference type="SMR" id="P44097"/>
<dbReference type="STRING" id="71421.HI_1036"/>
<dbReference type="EnsemblBacteria" id="AAC22696">
    <property type="protein sequence ID" value="AAC22696"/>
    <property type="gene ID" value="HI_1036"/>
</dbReference>
<dbReference type="KEGG" id="hin:HI_1036"/>
<dbReference type="PATRIC" id="fig|71421.8.peg.1080"/>
<dbReference type="eggNOG" id="COG0762">
    <property type="taxonomic scope" value="Bacteria"/>
</dbReference>
<dbReference type="HOGENOM" id="CLU_089905_1_0_6"/>
<dbReference type="OrthoDB" id="9806665at2"/>
<dbReference type="PhylomeDB" id="P44097"/>
<dbReference type="BioCyc" id="HINF71421:G1GJ1-1076-MONOMER"/>
<dbReference type="Proteomes" id="UP000000579">
    <property type="component" value="Chromosome"/>
</dbReference>
<dbReference type="GO" id="GO:0005886">
    <property type="term" value="C:plasma membrane"/>
    <property type="evidence" value="ECO:0007669"/>
    <property type="project" value="UniProtKB-SubCell"/>
</dbReference>
<dbReference type="InterPro" id="IPR003425">
    <property type="entry name" value="CCB3/YggT"/>
</dbReference>
<dbReference type="PANTHER" id="PTHR33219:SF14">
    <property type="entry name" value="PROTEIN COFACTOR ASSEMBLY OF COMPLEX C SUBUNIT B CCB3, CHLOROPLASTIC-RELATED"/>
    <property type="match status" value="1"/>
</dbReference>
<dbReference type="PANTHER" id="PTHR33219">
    <property type="entry name" value="YLMG HOMOLOG PROTEIN 2, CHLOROPLASTIC"/>
    <property type="match status" value="1"/>
</dbReference>
<dbReference type="Pfam" id="PF02325">
    <property type="entry name" value="YGGT"/>
    <property type="match status" value="2"/>
</dbReference>
<accession>P44097</accession>
<reference key="1">
    <citation type="journal article" date="1995" name="Science">
        <title>Whole-genome random sequencing and assembly of Haemophilus influenzae Rd.</title>
        <authorList>
            <person name="Fleischmann R.D."/>
            <person name="Adams M.D."/>
            <person name="White O."/>
            <person name="Clayton R.A."/>
            <person name="Kirkness E.F."/>
            <person name="Kerlavage A.R."/>
            <person name="Bult C.J."/>
            <person name="Tomb J.-F."/>
            <person name="Dougherty B.A."/>
            <person name="Merrick J.M."/>
            <person name="McKenney K."/>
            <person name="Sutton G.G."/>
            <person name="FitzHugh W."/>
            <person name="Fields C.A."/>
            <person name="Gocayne J.D."/>
            <person name="Scott J.D."/>
            <person name="Shirley R."/>
            <person name="Liu L.-I."/>
            <person name="Glodek A."/>
            <person name="Kelley J.M."/>
            <person name="Weidman J.F."/>
            <person name="Phillips C.A."/>
            <person name="Spriggs T."/>
            <person name="Hedblom E."/>
            <person name="Cotton M.D."/>
            <person name="Utterback T.R."/>
            <person name="Hanna M.C."/>
            <person name="Nguyen D.T."/>
            <person name="Saudek D.M."/>
            <person name="Brandon R.C."/>
            <person name="Fine L.D."/>
            <person name="Fritchman J.L."/>
            <person name="Fuhrmann J.L."/>
            <person name="Geoghagen N.S.M."/>
            <person name="Gnehm C.L."/>
            <person name="McDonald L.A."/>
            <person name="Small K.V."/>
            <person name="Fraser C.M."/>
            <person name="Smith H.O."/>
            <person name="Venter J.C."/>
        </authorList>
    </citation>
    <scope>NUCLEOTIDE SEQUENCE [LARGE SCALE GENOMIC DNA]</scope>
    <source>
        <strain>ATCC 51907 / DSM 11121 / KW20 / Rd</strain>
    </source>
</reference>
<name>Y1036_HAEIN</name>
<evidence type="ECO:0000255" key="1"/>
<evidence type="ECO:0000305" key="2"/>
<gene>
    <name type="ordered locus">HI_1036</name>
</gene>
<organism>
    <name type="scientific">Haemophilus influenzae (strain ATCC 51907 / DSM 11121 / KW20 / Rd)</name>
    <dbReference type="NCBI Taxonomy" id="71421"/>
    <lineage>
        <taxon>Bacteria</taxon>
        <taxon>Pseudomonadati</taxon>
        <taxon>Pseudomonadota</taxon>
        <taxon>Gammaproteobacteria</taxon>
        <taxon>Pasteurellales</taxon>
        <taxon>Pasteurellaceae</taxon>
        <taxon>Haemophilus</taxon>
    </lineage>
</organism>
<keyword id="KW-1003">Cell membrane</keyword>
<keyword id="KW-0472">Membrane</keyword>
<keyword id="KW-1185">Reference proteome</keyword>
<keyword id="KW-0812">Transmembrane</keyword>
<keyword id="KW-1133">Transmembrane helix</keyword>
<feature type="chain" id="PRO_0000169378" description="Uncharacterized protein HI_1036">
    <location>
        <begin position="1"/>
        <end position="181"/>
    </location>
</feature>
<feature type="transmembrane region" description="Helical" evidence="1">
    <location>
        <begin position="3"/>
        <end position="23"/>
    </location>
</feature>
<feature type="transmembrane region" description="Helical" evidence="1">
    <location>
        <begin position="67"/>
        <end position="87"/>
    </location>
</feature>
<feature type="transmembrane region" description="Helical" evidence="1">
    <location>
        <begin position="92"/>
        <end position="112"/>
    </location>
</feature>
<feature type="transmembrane region" description="Helical" evidence="1">
    <location>
        <begin position="159"/>
        <end position="179"/>
    </location>
</feature>
<comment type="subcellular location">
    <subcellularLocation>
        <location evidence="2">Cell membrane</location>
        <topology evidence="2">Multi-pass membrane protein</topology>
    </subcellularLocation>
</comment>
<comment type="similarity">
    <text evidence="2">Belongs to the YggT family.</text>
</comment>
<comment type="sequence caution" evidence="2">
    <conflict type="erroneous initiation">
        <sequence resource="EMBL-CDS" id="AAC22696"/>
    </conflict>
</comment>